<comment type="function">
    <text evidence="1">Responsible for the release of ribosomes from messenger RNA at the termination of protein biosynthesis. May increase the efficiency of translation by recycling ribosomes from one round of translation to another.</text>
</comment>
<comment type="subcellular location">
    <subcellularLocation>
        <location evidence="1">Cytoplasm</location>
    </subcellularLocation>
</comment>
<comment type="similarity">
    <text evidence="1">Belongs to the RRF family.</text>
</comment>
<accession>Q72U11</accession>
<proteinExistence type="inferred from homology"/>
<organism>
    <name type="scientific">Leptospira interrogans serogroup Icterohaemorrhagiae serovar copenhageni (strain Fiocruz L1-130)</name>
    <dbReference type="NCBI Taxonomy" id="267671"/>
    <lineage>
        <taxon>Bacteria</taxon>
        <taxon>Pseudomonadati</taxon>
        <taxon>Spirochaetota</taxon>
        <taxon>Spirochaetia</taxon>
        <taxon>Leptospirales</taxon>
        <taxon>Leptospiraceae</taxon>
        <taxon>Leptospira</taxon>
    </lineage>
</organism>
<gene>
    <name evidence="1" type="primary">frr</name>
    <name type="ordered locus">LIC_10853</name>
</gene>
<protein>
    <recommendedName>
        <fullName evidence="1">Ribosome-recycling factor</fullName>
        <shortName evidence="1">RRF</shortName>
    </recommendedName>
    <alternativeName>
        <fullName evidence="1">Ribosome-releasing factor</fullName>
    </alternativeName>
</protein>
<name>RRF_LEPIC</name>
<evidence type="ECO:0000255" key="1">
    <source>
        <dbReference type="HAMAP-Rule" id="MF_00040"/>
    </source>
</evidence>
<feature type="chain" id="PRO_0000167482" description="Ribosome-recycling factor">
    <location>
        <begin position="1"/>
        <end position="184"/>
    </location>
</feature>
<dbReference type="EMBL" id="AE016823">
    <property type="protein sequence ID" value="AAS69467.1"/>
    <property type="molecule type" value="Genomic_DNA"/>
</dbReference>
<dbReference type="RefSeq" id="WP_000135448.1">
    <property type="nucleotide sequence ID" value="NC_005823.1"/>
</dbReference>
<dbReference type="SMR" id="Q72U11"/>
<dbReference type="GeneID" id="61144185"/>
<dbReference type="KEGG" id="lic:LIC_10853"/>
<dbReference type="HOGENOM" id="CLU_073981_2_0_12"/>
<dbReference type="Proteomes" id="UP000007037">
    <property type="component" value="Chromosome I"/>
</dbReference>
<dbReference type="GO" id="GO:0005737">
    <property type="term" value="C:cytoplasm"/>
    <property type="evidence" value="ECO:0007669"/>
    <property type="project" value="UniProtKB-SubCell"/>
</dbReference>
<dbReference type="GO" id="GO:0043023">
    <property type="term" value="F:ribosomal large subunit binding"/>
    <property type="evidence" value="ECO:0007669"/>
    <property type="project" value="TreeGrafter"/>
</dbReference>
<dbReference type="GO" id="GO:0006415">
    <property type="term" value="P:translational termination"/>
    <property type="evidence" value="ECO:0007669"/>
    <property type="project" value="UniProtKB-UniRule"/>
</dbReference>
<dbReference type="CDD" id="cd00520">
    <property type="entry name" value="RRF"/>
    <property type="match status" value="1"/>
</dbReference>
<dbReference type="FunFam" id="1.10.132.20:FF:000001">
    <property type="entry name" value="Ribosome-recycling factor"/>
    <property type="match status" value="1"/>
</dbReference>
<dbReference type="FunFam" id="3.30.1360.40:FF:000001">
    <property type="entry name" value="Ribosome-recycling factor"/>
    <property type="match status" value="1"/>
</dbReference>
<dbReference type="Gene3D" id="3.30.1360.40">
    <property type="match status" value="1"/>
</dbReference>
<dbReference type="Gene3D" id="1.10.132.20">
    <property type="entry name" value="Ribosome-recycling factor"/>
    <property type="match status" value="1"/>
</dbReference>
<dbReference type="HAMAP" id="MF_00040">
    <property type="entry name" value="RRF"/>
    <property type="match status" value="1"/>
</dbReference>
<dbReference type="InterPro" id="IPR002661">
    <property type="entry name" value="Ribosome_recyc_fac"/>
</dbReference>
<dbReference type="InterPro" id="IPR023584">
    <property type="entry name" value="Ribosome_recyc_fac_dom"/>
</dbReference>
<dbReference type="InterPro" id="IPR036191">
    <property type="entry name" value="RRF_sf"/>
</dbReference>
<dbReference type="NCBIfam" id="TIGR00496">
    <property type="entry name" value="frr"/>
    <property type="match status" value="1"/>
</dbReference>
<dbReference type="PANTHER" id="PTHR20982:SF3">
    <property type="entry name" value="MITOCHONDRIAL RIBOSOME RECYCLING FACTOR PSEUDO 1"/>
    <property type="match status" value="1"/>
</dbReference>
<dbReference type="PANTHER" id="PTHR20982">
    <property type="entry name" value="RIBOSOME RECYCLING FACTOR"/>
    <property type="match status" value="1"/>
</dbReference>
<dbReference type="Pfam" id="PF01765">
    <property type="entry name" value="RRF"/>
    <property type="match status" value="1"/>
</dbReference>
<dbReference type="SUPFAM" id="SSF55194">
    <property type="entry name" value="Ribosome recycling factor, RRF"/>
    <property type="match status" value="1"/>
</dbReference>
<keyword id="KW-0963">Cytoplasm</keyword>
<keyword id="KW-0648">Protein biosynthesis</keyword>
<reference key="1">
    <citation type="journal article" date="2004" name="J. Bacteriol.">
        <title>Comparative genomics of two Leptospira interrogans serovars reveals novel insights into physiology and pathogenesis.</title>
        <authorList>
            <person name="Nascimento A.L.T.O."/>
            <person name="Ko A.I."/>
            <person name="Martins E.A.L."/>
            <person name="Monteiro-Vitorello C.B."/>
            <person name="Ho P.L."/>
            <person name="Haake D.A."/>
            <person name="Verjovski-Almeida S."/>
            <person name="Hartskeerl R.A."/>
            <person name="Marques M.V."/>
            <person name="Oliveira M.C."/>
            <person name="Menck C.F.M."/>
            <person name="Leite L.C.C."/>
            <person name="Carrer H."/>
            <person name="Coutinho L.L."/>
            <person name="Degrave W.M."/>
            <person name="Dellagostin O.A."/>
            <person name="El-Dorry H."/>
            <person name="Ferro E.S."/>
            <person name="Ferro M.I.T."/>
            <person name="Furlan L.R."/>
            <person name="Gamberini M."/>
            <person name="Giglioti E.A."/>
            <person name="Goes-Neto A."/>
            <person name="Goldman G.H."/>
            <person name="Goldman M.H.S."/>
            <person name="Harakava R."/>
            <person name="Jeronimo S.M.B."/>
            <person name="Junqueira-de-Azevedo I.L.M."/>
            <person name="Kimura E.T."/>
            <person name="Kuramae E.E."/>
            <person name="Lemos E.G.M."/>
            <person name="Lemos M.V.F."/>
            <person name="Marino C.L."/>
            <person name="Nunes L.R."/>
            <person name="de Oliveira R.C."/>
            <person name="Pereira G.G."/>
            <person name="Reis M.S."/>
            <person name="Schriefer A."/>
            <person name="Siqueira W.J."/>
            <person name="Sommer P."/>
            <person name="Tsai S.M."/>
            <person name="Simpson A.J.G."/>
            <person name="Ferro J.A."/>
            <person name="Camargo L.E.A."/>
            <person name="Kitajima J.P."/>
            <person name="Setubal J.C."/>
            <person name="Van Sluys M.A."/>
        </authorList>
    </citation>
    <scope>NUCLEOTIDE SEQUENCE [LARGE SCALE GENOMIC DNA]</scope>
    <source>
        <strain>Fiocruz L1-130</strain>
    </source>
</reference>
<sequence>MASDAIISGMKTKMDKTIDLVKKDFGTIRTGRANPSLVEDIRVDYYGNQTPINQLGNISVPEPRMLVISPYDKGIMKDIEKAIQTSGLGLQPTNDGVVIRIVIPELTGERRKELAKVVKSKSEEKKVAIRNIRRDAMEDLKKHTEGMSQDEIKSVQDQIQKITDSYIDKISALTAEKEKEITTI</sequence>